<keyword id="KW-0002">3D-structure</keyword>
<keyword id="KW-0025">Alternative splicing</keyword>
<keyword id="KW-0130">Cell adhesion</keyword>
<keyword id="KW-1003">Cell membrane</keyword>
<keyword id="KW-0903">Direct protein sequencing</keyword>
<keyword id="KW-1015">Disulfide bond</keyword>
<keyword id="KW-0325">Glycoprotein</keyword>
<keyword id="KW-0393">Immunoglobulin domain</keyword>
<keyword id="KW-0472">Membrane</keyword>
<keyword id="KW-0524">Neurogenesis</keyword>
<keyword id="KW-1185">Reference proteome</keyword>
<keyword id="KW-0677">Repeat</keyword>
<keyword id="KW-0732">Signal</keyword>
<keyword id="KW-0770">Synapse</keyword>
<keyword id="KW-0812">Transmembrane</keyword>
<keyword id="KW-1133">Transmembrane helix</keyword>
<name>NPTN_RAT</name>
<evidence type="ECO:0000250" key="1"/>
<evidence type="ECO:0000250" key="2">
    <source>
        <dbReference type="UniProtKB" id="Q9Y639"/>
    </source>
</evidence>
<evidence type="ECO:0000255" key="3"/>
<evidence type="ECO:0000255" key="4">
    <source>
        <dbReference type="PROSITE-ProRule" id="PRU00114"/>
    </source>
</evidence>
<evidence type="ECO:0000256" key="5">
    <source>
        <dbReference type="SAM" id="MobiDB-lite"/>
    </source>
</evidence>
<evidence type="ECO:0000269" key="6">
    <source>
    </source>
</evidence>
<evidence type="ECO:0000269" key="7">
    <source>
    </source>
</evidence>
<evidence type="ECO:0000269" key="8">
    <source>
    </source>
</evidence>
<evidence type="ECO:0000269" key="9">
    <source>
    </source>
</evidence>
<evidence type="ECO:0000269" key="10">
    <source ref="4"/>
</evidence>
<evidence type="ECO:0000303" key="11">
    <source>
    </source>
</evidence>
<evidence type="ECO:0000303" key="12">
    <source>
    </source>
</evidence>
<evidence type="ECO:0000305" key="13"/>
<evidence type="ECO:0007744" key="14">
    <source>
    </source>
</evidence>
<evidence type="ECO:0007829" key="15">
    <source>
        <dbReference type="PDB" id="2WV3"/>
    </source>
</evidence>
<dbReference type="EMBL" id="X99337">
    <property type="protein sequence ID" value="CAA67711.1"/>
    <property type="molecule type" value="mRNA"/>
</dbReference>
<dbReference type="EMBL" id="X99338">
    <property type="protein sequence ID" value="CAA67712.1"/>
    <property type="molecule type" value="mRNA"/>
</dbReference>
<dbReference type="EMBL" id="BC070947">
    <property type="protein sequence ID" value="AAH70947.1"/>
    <property type="molecule type" value="mRNA"/>
</dbReference>
<dbReference type="RefSeq" id="NP_001400277.1">
    <molecule id="P97546-1"/>
    <property type="nucleotide sequence ID" value="NM_001413348.1"/>
</dbReference>
<dbReference type="RefSeq" id="NP_001400278.1">
    <molecule id="P97546-3"/>
    <property type="nucleotide sequence ID" value="NM_001413349.1"/>
</dbReference>
<dbReference type="RefSeq" id="NP_062253.1">
    <molecule id="P97546-2"/>
    <property type="nucleotide sequence ID" value="NM_019380.3"/>
</dbReference>
<dbReference type="RefSeq" id="XP_006243236.1">
    <property type="nucleotide sequence ID" value="XM_006243174.3"/>
</dbReference>
<dbReference type="RefSeq" id="XP_008764552.1">
    <property type="nucleotide sequence ID" value="XM_008766330.2"/>
</dbReference>
<dbReference type="PDB" id="2WV3">
    <property type="method" value="X-ray"/>
    <property type="resolution" value="1.95 A"/>
    <property type="chains" value="A=148-333"/>
</dbReference>
<dbReference type="PDBsum" id="2WV3"/>
<dbReference type="SMR" id="P97546"/>
<dbReference type="BioGRID" id="248557">
    <property type="interactions" value="1"/>
</dbReference>
<dbReference type="FunCoup" id="P97546">
    <property type="interactions" value="1796"/>
</dbReference>
<dbReference type="IntAct" id="P97546">
    <property type="interactions" value="1"/>
</dbReference>
<dbReference type="MINT" id="P97546"/>
<dbReference type="STRING" id="10116.ENSRNOP00000012091"/>
<dbReference type="GlyCosmos" id="P97546">
    <property type="glycosylation" value="6 sites, 35 glycans"/>
</dbReference>
<dbReference type="GlyGen" id="P97546">
    <property type="glycosylation" value="7 sites, 34 N-linked glycans (2 sites), 4 N-linked;o-linked glycans (1 site)"/>
</dbReference>
<dbReference type="iPTMnet" id="P97546"/>
<dbReference type="PhosphoSitePlus" id="P97546"/>
<dbReference type="SwissPalm" id="P97546"/>
<dbReference type="jPOST" id="P97546"/>
<dbReference type="PaxDb" id="10116-ENSRNOP00000012091"/>
<dbReference type="GeneID" id="56064"/>
<dbReference type="KEGG" id="rno:56064"/>
<dbReference type="UCSC" id="RGD:620296">
    <molecule id="P97546-2"/>
    <property type="organism name" value="rat"/>
</dbReference>
<dbReference type="AGR" id="RGD:620296"/>
<dbReference type="CTD" id="27020"/>
<dbReference type="RGD" id="620296">
    <property type="gene designation" value="Nptn"/>
</dbReference>
<dbReference type="VEuPathDB" id="HostDB:ENSRNOG00000009029"/>
<dbReference type="eggNOG" id="ENOG502QPKN">
    <property type="taxonomic scope" value="Eukaryota"/>
</dbReference>
<dbReference type="HOGENOM" id="CLU_058449_1_1_1"/>
<dbReference type="InParanoid" id="P97546"/>
<dbReference type="PhylomeDB" id="P97546"/>
<dbReference type="EvolutionaryTrace" id="P97546"/>
<dbReference type="PRO" id="PR:P97546"/>
<dbReference type="Proteomes" id="UP000002494">
    <property type="component" value="Chromosome 8"/>
</dbReference>
<dbReference type="Bgee" id="ENSRNOG00000009029">
    <property type="expression patterns" value="Expressed in cerebellum and 20 other cell types or tissues"/>
</dbReference>
<dbReference type="GO" id="GO:0030424">
    <property type="term" value="C:axon"/>
    <property type="evidence" value="ECO:0000318"/>
    <property type="project" value="GO_Central"/>
</dbReference>
<dbReference type="GO" id="GO:0009986">
    <property type="term" value="C:cell surface"/>
    <property type="evidence" value="ECO:0000314"/>
    <property type="project" value="RGD"/>
</dbReference>
<dbReference type="GO" id="GO:0030425">
    <property type="term" value="C:dendrite"/>
    <property type="evidence" value="ECO:0000314"/>
    <property type="project" value="RGD"/>
</dbReference>
<dbReference type="GO" id="GO:0098982">
    <property type="term" value="C:GABA-ergic synapse"/>
    <property type="evidence" value="ECO:0000314"/>
    <property type="project" value="SynGO"/>
</dbReference>
<dbReference type="GO" id="GO:0098978">
    <property type="term" value="C:glutamatergic synapse"/>
    <property type="evidence" value="ECO:0000314"/>
    <property type="project" value="SynGO"/>
</dbReference>
<dbReference type="GO" id="GO:0001772">
    <property type="term" value="C:immunological synapse"/>
    <property type="evidence" value="ECO:0000250"/>
    <property type="project" value="UniProtKB"/>
</dbReference>
<dbReference type="GO" id="GO:0060077">
    <property type="term" value="C:inhibitory synapse"/>
    <property type="evidence" value="ECO:0000314"/>
    <property type="project" value="RGD"/>
</dbReference>
<dbReference type="GO" id="GO:0016020">
    <property type="term" value="C:membrane"/>
    <property type="evidence" value="ECO:0000304"/>
    <property type="project" value="BHF-UCL"/>
</dbReference>
<dbReference type="GO" id="GO:0005886">
    <property type="term" value="C:plasma membrane"/>
    <property type="evidence" value="ECO:0000318"/>
    <property type="project" value="GO_Central"/>
</dbReference>
<dbReference type="GO" id="GO:0098839">
    <property type="term" value="C:postsynaptic density membrane"/>
    <property type="evidence" value="ECO:0000314"/>
    <property type="project" value="SynGO"/>
</dbReference>
<dbReference type="GO" id="GO:0045211">
    <property type="term" value="C:postsynaptic membrane"/>
    <property type="evidence" value="ECO:0000304"/>
    <property type="project" value="HGNC-UCL"/>
</dbReference>
<dbReference type="GO" id="GO:0048787">
    <property type="term" value="C:presynaptic active zone membrane"/>
    <property type="evidence" value="ECO:0000314"/>
    <property type="project" value="SynGO"/>
</dbReference>
<dbReference type="GO" id="GO:0042734">
    <property type="term" value="C:presynaptic membrane"/>
    <property type="evidence" value="ECO:0000314"/>
    <property type="project" value="HGNC-UCL"/>
</dbReference>
<dbReference type="GO" id="GO:0098685">
    <property type="term" value="C:Schaffer collateral - CA1 synapse"/>
    <property type="evidence" value="ECO:0000314"/>
    <property type="project" value="SynGO"/>
</dbReference>
<dbReference type="GO" id="GO:0097060">
    <property type="term" value="C:synaptic membrane"/>
    <property type="evidence" value="ECO:0000314"/>
    <property type="project" value="RGD"/>
</dbReference>
<dbReference type="GO" id="GO:0050839">
    <property type="term" value="F:cell adhesion molecule binding"/>
    <property type="evidence" value="ECO:0000314"/>
    <property type="project" value="HGNC-UCL"/>
</dbReference>
<dbReference type="GO" id="GO:0098632">
    <property type="term" value="F:cell-cell adhesion mediator activity"/>
    <property type="evidence" value="ECO:0000318"/>
    <property type="project" value="GO_Central"/>
</dbReference>
<dbReference type="GO" id="GO:0044325">
    <property type="term" value="F:transmembrane transporter binding"/>
    <property type="evidence" value="ECO:0000353"/>
    <property type="project" value="RGD"/>
</dbReference>
<dbReference type="GO" id="GO:0005105">
    <property type="term" value="F:type 1 fibroblast growth factor receptor binding"/>
    <property type="evidence" value="ECO:0000314"/>
    <property type="project" value="UniProtKB"/>
</dbReference>
<dbReference type="GO" id="GO:0007411">
    <property type="term" value="P:axon guidance"/>
    <property type="evidence" value="ECO:0000318"/>
    <property type="project" value="GO_Central"/>
</dbReference>
<dbReference type="GO" id="GO:0070593">
    <property type="term" value="P:dendrite self-avoidance"/>
    <property type="evidence" value="ECO:0000318"/>
    <property type="project" value="GO_Central"/>
</dbReference>
<dbReference type="GO" id="GO:1904861">
    <property type="term" value="P:excitatory synapse assembly"/>
    <property type="evidence" value="ECO:0000266"/>
    <property type="project" value="RGD"/>
</dbReference>
<dbReference type="GO" id="GO:0007156">
    <property type="term" value="P:homophilic cell adhesion via plasma membrane adhesion molecules"/>
    <property type="evidence" value="ECO:0000314"/>
    <property type="project" value="HGNC-UCL"/>
</dbReference>
<dbReference type="GO" id="GO:0006874">
    <property type="term" value="P:intracellular calcium ion homeostasis"/>
    <property type="evidence" value="ECO:0000266"/>
    <property type="project" value="RGD"/>
</dbReference>
<dbReference type="GO" id="GO:0060291">
    <property type="term" value="P:long-term synaptic potentiation"/>
    <property type="evidence" value="ECO:0000314"/>
    <property type="project" value="UniProtKB"/>
</dbReference>
<dbReference type="GO" id="GO:0050804">
    <property type="term" value="P:modulation of chemical synaptic transmission"/>
    <property type="evidence" value="ECO:0000266"/>
    <property type="project" value="RGD"/>
</dbReference>
<dbReference type="GO" id="GO:0001818">
    <property type="term" value="P:negative regulation of cytokine production"/>
    <property type="evidence" value="ECO:0000250"/>
    <property type="project" value="UniProtKB"/>
</dbReference>
<dbReference type="GO" id="GO:0007204">
    <property type="term" value="P:positive regulation of cytosolic calcium ion concentration"/>
    <property type="evidence" value="ECO:0000314"/>
    <property type="project" value="UniProtKB"/>
</dbReference>
<dbReference type="GO" id="GO:0070374">
    <property type="term" value="P:positive regulation of ERK1 and ERK2 cascade"/>
    <property type="evidence" value="ECO:0000314"/>
    <property type="project" value="RGD"/>
</dbReference>
<dbReference type="GO" id="GO:0045743">
    <property type="term" value="P:positive regulation of fibroblast growth factor receptor signaling pathway"/>
    <property type="evidence" value="ECO:0000314"/>
    <property type="project" value="UniProtKB"/>
</dbReference>
<dbReference type="GO" id="GO:0048170">
    <property type="term" value="P:positive regulation of long-term neuronal synaptic plasticity"/>
    <property type="evidence" value="ECO:0000315"/>
    <property type="project" value="HGNC-UCL"/>
</dbReference>
<dbReference type="GO" id="GO:1900273">
    <property type="term" value="P:positive regulation of long-term synaptic potentiation"/>
    <property type="evidence" value="ECO:0000315"/>
    <property type="project" value="RGD"/>
</dbReference>
<dbReference type="GO" id="GO:0010976">
    <property type="term" value="P:positive regulation of neuron projection development"/>
    <property type="evidence" value="ECO:0000314"/>
    <property type="project" value="UniProtKB"/>
</dbReference>
<dbReference type="GO" id="GO:1903829">
    <property type="term" value="P:positive regulation of protein localization"/>
    <property type="evidence" value="ECO:0000315"/>
    <property type="project" value="RGD"/>
</dbReference>
<dbReference type="GO" id="GO:0001934">
    <property type="term" value="P:positive regulation of protein phosphorylation"/>
    <property type="evidence" value="ECO:0000314"/>
    <property type="project" value="UniProtKB"/>
</dbReference>
<dbReference type="GO" id="GO:0030155">
    <property type="term" value="P:regulation of cell adhesion"/>
    <property type="evidence" value="ECO:0000304"/>
    <property type="project" value="HGNC-UCL"/>
</dbReference>
<dbReference type="GO" id="GO:1902683">
    <property type="term" value="P:regulation of receptor localization to synapse"/>
    <property type="evidence" value="ECO:0000266"/>
    <property type="project" value="RGD"/>
</dbReference>
<dbReference type="GO" id="GO:0050808">
    <property type="term" value="P:synapse organization"/>
    <property type="evidence" value="ECO:0000266"/>
    <property type="project" value="RGD"/>
</dbReference>
<dbReference type="GO" id="GO:0099557">
    <property type="term" value="P:trans-synaptic signaling by trans-synaptic complex, modulating synaptic transmission"/>
    <property type="evidence" value="ECO:0000314"/>
    <property type="project" value="SynGO"/>
</dbReference>
<dbReference type="GO" id="GO:0008542">
    <property type="term" value="P:visual learning"/>
    <property type="evidence" value="ECO:0000314"/>
    <property type="project" value="RGD"/>
</dbReference>
<dbReference type="FunFam" id="2.60.40.10:FF:000385">
    <property type="entry name" value="Neuroplastin a"/>
    <property type="match status" value="1"/>
</dbReference>
<dbReference type="FunFam" id="2.60.40.10:FF:000291">
    <property type="entry name" value="Neuroplastin b"/>
    <property type="match status" value="1"/>
</dbReference>
<dbReference type="FunFam" id="2.60.40.10:FF:000387">
    <property type="entry name" value="Neuroplastin b"/>
    <property type="match status" value="1"/>
</dbReference>
<dbReference type="Gene3D" id="2.60.40.10">
    <property type="entry name" value="Immunoglobulins"/>
    <property type="match status" value="3"/>
</dbReference>
<dbReference type="InterPro" id="IPR007110">
    <property type="entry name" value="Ig-like_dom"/>
</dbReference>
<dbReference type="InterPro" id="IPR036179">
    <property type="entry name" value="Ig-like_dom_sf"/>
</dbReference>
<dbReference type="InterPro" id="IPR013783">
    <property type="entry name" value="Ig-like_fold"/>
</dbReference>
<dbReference type="InterPro" id="IPR013098">
    <property type="entry name" value="Ig_I-set"/>
</dbReference>
<dbReference type="InterPro" id="IPR003599">
    <property type="entry name" value="Ig_sub"/>
</dbReference>
<dbReference type="InterPro" id="IPR003598">
    <property type="entry name" value="Ig_sub2"/>
</dbReference>
<dbReference type="PANTHER" id="PTHR10075">
    <property type="entry name" value="BASIGIN RELATED"/>
    <property type="match status" value="1"/>
</dbReference>
<dbReference type="PANTHER" id="PTHR10075:SF108">
    <property type="entry name" value="NEUROPLASTIN"/>
    <property type="match status" value="1"/>
</dbReference>
<dbReference type="Pfam" id="PF07679">
    <property type="entry name" value="I-set"/>
    <property type="match status" value="1"/>
</dbReference>
<dbReference type="Pfam" id="PF13927">
    <property type="entry name" value="Ig_3"/>
    <property type="match status" value="1"/>
</dbReference>
<dbReference type="PIRSF" id="PIRSF000615">
    <property type="entry name" value="TyrPK_CSF1-R"/>
    <property type="match status" value="1"/>
</dbReference>
<dbReference type="SMART" id="SM00409">
    <property type="entry name" value="IG"/>
    <property type="match status" value="3"/>
</dbReference>
<dbReference type="SMART" id="SM00408">
    <property type="entry name" value="IGc2"/>
    <property type="match status" value="2"/>
</dbReference>
<dbReference type="SUPFAM" id="SSF48726">
    <property type="entry name" value="Immunoglobulin"/>
    <property type="match status" value="3"/>
</dbReference>
<dbReference type="PROSITE" id="PS50835">
    <property type="entry name" value="IG_LIKE"/>
    <property type="match status" value="3"/>
</dbReference>
<comment type="function">
    <text evidence="2 6 7">Probable homophilic and heterophilic cell adhesion molecule involved in long term potentiation at hippocampal excitatory synapses through activation of p38MAPK (PubMed:10759566, PubMed:16925595). May also regulate neurite outgrowth by activating the FGFR1 signaling pathway (PubMed:10759566, PubMed:16925595). May play a role in synaptic plasticity (PubMed:10759566, PubMed:16925595). Also acts as a chaperone for ATP2B1; stabilizes ATP2B1 and increases its ATPase activity. Promotes localization of XKR8 at the cell membrane (By similarity).</text>
</comment>
<comment type="subunit">
    <text evidence="2">Interacts with ATP2B1; this interaction stabilizes ATP2B1 and increases ATPase activity; this interaction controls T cell calcium homeostasis following T cell activation. Interacts with XKR8; promoting its localization at the cell membrane.</text>
</comment>
<comment type="subcellular location">
    <subcellularLocation>
        <location evidence="13">Cell membrane</location>
        <topology evidence="13">Single-pass type I membrane protein</topology>
    </subcellularLocation>
</comment>
<comment type="subcellular location">
    <molecule>Isoform 2</molecule>
    <subcellularLocation>
        <location evidence="6">Postsynaptic density</location>
    </subcellularLocation>
</comment>
<comment type="alternative products">
    <event type="alternative splicing"/>
    <isoform>
        <id>P97546-2</id>
        <name>2</name>
        <name>gp65</name>
        <name>np65</name>
        <sequence type="displayed"/>
    </isoform>
    <isoform>
        <id>P97546-1</id>
        <name>1</name>
        <name>gp55</name>
        <name>np55</name>
        <sequence type="described" ref="VSP_039258 VSP_039259"/>
    </isoform>
    <isoform>
        <id>P97546-3</id>
        <name>3</name>
        <sequence type="described" ref="VSP_039258"/>
    </isoform>
</comment>
<comment type="tissue specificity">
    <text evidence="9 10">Isoform 1 is ubiquitously expressed. Isoform 2 is brain-specific. In brain isoform 2 is highly expressed in hippocampus and cerebral cortex and weakly in cerebellum and lower brain regions. In the hippocampus isoform 2 is found in the dentate gyrus and CA1-CA4, the striatum oriens of CA3 shows the higher level.</text>
</comment>
<comment type="developmental stage">
    <text evidence="9">Isoform 1 is detectable at all developmental stages starting from postnatal day 1. Isoform 2 is low at postnatal day 1, increases steadily until postnatal days 20-25 and then declines to an intermediate level.</text>
</comment>
<comment type="domain">
    <text>Some isoforms lack the first Ig-like domain which may confer homophilic adhesion activity. However, they can bind and activate FGFR1.</text>
</comment>
<comment type="PTM">
    <text evidence="8 9">Isoform 1 and isoform 2 are N-glycosylated.</text>
</comment>
<feature type="signal peptide" evidence="1">
    <location>
        <begin position="1"/>
        <end position="28"/>
    </location>
</feature>
<feature type="chain" id="PRO_0000394472" description="Neuroplastin">
    <location>
        <begin position="29"/>
        <end position="393"/>
    </location>
</feature>
<feature type="topological domain" description="Extracellular" evidence="3">
    <location>
        <begin position="29"/>
        <end position="338"/>
    </location>
</feature>
<feature type="transmembrane region" description="Helical" evidence="2">
    <location>
        <begin position="339"/>
        <end position="359"/>
    </location>
</feature>
<feature type="topological domain" description="Cytoplasmic" evidence="3">
    <location>
        <begin position="360"/>
        <end position="393"/>
    </location>
</feature>
<feature type="domain" description="Ig-like 1">
    <location>
        <begin position="29"/>
        <end position="134"/>
    </location>
</feature>
<feature type="domain" description="Ig-like 2">
    <location>
        <begin position="148"/>
        <end position="234"/>
    </location>
</feature>
<feature type="domain" description="Ig-like 3">
    <location>
        <begin position="237"/>
        <end position="327"/>
    </location>
</feature>
<feature type="region of interest" description="Narpin; mediates binding with FGFR1 and has antidepressant-like activity">
    <location>
        <begin position="149"/>
        <end position="161"/>
    </location>
</feature>
<feature type="region of interest" description="Disordered" evidence="5">
    <location>
        <begin position="366"/>
        <end position="393"/>
    </location>
</feature>
<feature type="glycosylation site" description="N-linked (GlcNAc...) asparagine" evidence="8">
    <location>
        <position position="170"/>
    </location>
</feature>
<feature type="glycosylation site" description="N-linked (GlcNAc...) asparagine" evidence="14">
    <location>
        <position position="196"/>
    </location>
</feature>
<feature type="glycosylation site" description="N-linked (GlcNAc...) asparagine" evidence="8 14">
    <location>
        <position position="228"/>
    </location>
</feature>
<feature type="glycosylation site" description="N-linked (GlcNAc...) asparagine" evidence="8">
    <location>
        <position position="283"/>
    </location>
</feature>
<feature type="glycosylation site" description="N-linked (GlcNAc...) asparagine" evidence="8">
    <location>
        <position position="295"/>
    </location>
</feature>
<feature type="glycosylation site" description="N-linked (GlcNAc...) asparagine" evidence="3">
    <location>
        <position position="316"/>
    </location>
</feature>
<feature type="disulfide bond" evidence="4">
    <location>
        <begin position="52"/>
        <end position="116"/>
    </location>
</feature>
<feature type="disulfide bond" evidence="4 8">
    <location>
        <begin position="169"/>
        <end position="217"/>
    </location>
</feature>
<feature type="disulfide bond" evidence="4 8">
    <location>
        <begin position="258"/>
        <end position="315"/>
    </location>
</feature>
<feature type="splice variant" id="VSP_039258" description="In isoform 1 and isoform 3." evidence="11 12">
    <original>AGFVKSPMSETKLTGDAFELYCDVVGSPTPEIQWWYAEVNRAESFRQLWDGARKRRVTVNTAYGSNGVSVLRITRLTLEDSGTYECRASNDPKRNDLRQNPSITWIRAQATISVLQK</original>
    <variation>E</variation>
    <location>
        <begin position="31"/>
        <end position="147"/>
    </location>
</feature>
<feature type="splice variant" id="VSP_039259" description="In isoform 1." evidence="12">
    <original>D</original>
    <variation>DDDEP</variation>
    <location>
        <position position="370"/>
    </location>
</feature>
<feature type="strand" evidence="15">
    <location>
        <begin position="149"/>
        <end position="152"/>
    </location>
</feature>
<feature type="strand" evidence="15">
    <location>
        <begin position="161"/>
        <end position="163"/>
    </location>
</feature>
<feature type="strand" evidence="15">
    <location>
        <begin position="165"/>
        <end position="173"/>
    </location>
</feature>
<feature type="strand" evidence="15">
    <location>
        <begin position="178"/>
        <end position="185"/>
    </location>
</feature>
<feature type="strand" evidence="15">
    <location>
        <begin position="198"/>
        <end position="206"/>
    </location>
</feature>
<feature type="helix" evidence="15">
    <location>
        <begin position="209"/>
        <end position="211"/>
    </location>
</feature>
<feature type="strand" evidence="15">
    <location>
        <begin position="213"/>
        <end position="221"/>
    </location>
</feature>
<feature type="strand" evidence="15">
    <location>
        <begin position="224"/>
        <end position="234"/>
    </location>
</feature>
<feature type="strand" evidence="15">
    <location>
        <begin position="238"/>
        <end position="242"/>
    </location>
</feature>
<feature type="strand" evidence="15">
    <location>
        <begin position="244"/>
        <end position="249"/>
    </location>
</feature>
<feature type="strand" evidence="15">
    <location>
        <begin position="254"/>
        <end position="261"/>
    </location>
</feature>
<feature type="strand" evidence="15">
    <location>
        <begin position="267"/>
        <end position="274"/>
    </location>
</feature>
<feature type="strand" evidence="15">
    <location>
        <begin position="277"/>
        <end position="280"/>
    </location>
</feature>
<feature type="strand" evidence="15">
    <location>
        <begin position="288"/>
        <end position="292"/>
    </location>
</feature>
<feature type="strand" evidence="15">
    <location>
        <begin position="294"/>
        <end position="301"/>
    </location>
</feature>
<feature type="turn" evidence="15">
    <location>
        <begin position="306"/>
        <end position="308"/>
    </location>
</feature>
<feature type="strand" evidence="15">
    <location>
        <begin position="311"/>
        <end position="318"/>
    </location>
</feature>
<feature type="strand" evidence="15">
    <location>
        <begin position="323"/>
        <end position="333"/>
    </location>
</feature>
<accession>P97546</accession>
<accession>P97547</accession>
<accession>Q6IRE8</accession>
<proteinExistence type="evidence at protein level"/>
<sequence length="393" mass="43932">MSGSSLPGALALSLLLVSGSLLPGPGAAQNAGFVKSPMSETKLTGDAFELYCDVVGSPTPEIQWWYAEVNRAESFRQLWDGARKRRVTVNTAYGSNGVSVLRITRLTLEDSGTYECRASNDPKRNDLRQNPSITWIRAQATISVLQKPRIVTSEEVIIRDSLLPVTLQCNLTSSSHTLMYSYWTKNGVELTATRKNASNMEYRINKPRAEDSGEYHCVYHFVSAPKANATIEVKAAPDITGHKRSENKNEGQDAMMYCKSVGYPHPEWMWRKKENGVFEEISNSSGRFFIINKENYTELNIVNLQITEDPGEYECNATNSIGSASVSTVLRVRSHLAPLWPFLGILAEIIILVVIIVVYEKRKRPDEVPDAGPMKTNSTNNHKDKNLRQRNTN</sequence>
<organism>
    <name type="scientific">Rattus norvegicus</name>
    <name type="common">Rat</name>
    <dbReference type="NCBI Taxonomy" id="10116"/>
    <lineage>
        <taxon>Eukaryota</taxon>
        <taxon>Metazoa</taxon>
        <taxon>Chordata</taxon>
        <taxon>Craniata</taxon>
        <taxon>Vertebrata</taxon>
        <taxon>Euteleostomi</taxon>
        <taxon>Mammalia</taxon>
        <taxon>Eutheria</taxon>
        <taxon>Euarchontoglires</taxon>
        <taxon>Glires</taxon>
        <taxon>Rodentia</taxon>
        <taxon>Myomorpha</taxon>
        <taxon>Muroidea</taxon>
        <taxon>Muridae</taxon>
        <taxon>Murinae</taxon>
        <taxon>Rattus</taxon>
    </lineage>
</organism>
<gene>
    <name type="primary">Nptn</name>
    <name type="synonym">Sdfr1</name>
    <name type="synonym">Sdr1</name>
</gene>
<protein>
    <recommendedName>
        <fullName>Neuroplastin</fullName>
    </recommendedName>
    <alternativeName>
        <fullName>Glycoprotein 55/65</fullName>
        <shortName>gp55/65</shortName>
    </alternativeName>
    <alternativeName>
        <fullName>Stromal cell-derived receptor 1</fullName>
        <shortName>SDR-1</shortName>
    </alternativeName>
</protein>
<reference key="1">
    <citation type="journal article" date="1997" name="J. Biol. Chem.">
        <title>Synaptic membrane glycoproteins gp65 and gp55 are new members of the immunoglobulin superfamily.</title>
        <authorList>
            <person name="Langnaese K."/>
            <person name="Beesley P.W."/>
            <person name="Gundelfinger E.D."/>
        </authorList>
    </citation>
    <scope>NUCLEOTIDE SEQUENCE [MRNA] (ISOFORMS 1 AND 2)</scope>
    <scope>TISSUE SPECIFICITY</scope>
    <scope>DEVELOPMENTAL STAGE</scope>
    <scope>GLYCOSYLATION</scope>
    <source>
        <strain>Sprague-Dawley</strain>
        <tissue>Brain</tissue>
    </source>
</reference>
<reference key="2">
    <citation type="journal article" date="2004" name="Genome Res.">
        <title>The status, quality, and expansion of the NIH full-length cDNA project: the Mammalian Gene Collection (MGC).</title>
        <authorList>
            <consortium name="The MGC Project Team"/>
        </authorList>
    </citation>
    <scope>NUCLEOTIDE SEQUENCE [LARGE SCALE MRNA] (ISOFORM 3)</scope>
    <source>
        <tissue>Heart</tissue>
    </source>
</reference>
<reference key="3">
    <citation type="submission" date="2007-09" db="UniProtKB">
        <authorList>
            <person name="Lubec G."/>
            <person name="Kang S.U."/>
            <person name="Lubec S."/>
        </authorList>
    </citation>
    <scope>PROTEIN SEQUENCE OF 150-159; 186-194; 209-226; 235-243; 245-271; 288-293 AND 363-379 (ISOFORM 1)</scope>
    <scope>IDENTIFICATION BY MASS SPECTROMETRY</scope>
    <source>
        <strain>Sprague-Dawley</strain>
        <tissue>Brain</tissue>
    </source>
</reference>
<reference key="4">
    <citation type="journal article" date="1999" name="Biomed. Res.">
        <title>Isoform specific expression of the SDR-1 protein, alpha and beta in subregions of adult rodent brain.</title>
        <authorList>
            <person name="Lopez N.D."/>
            <person name="Kinoshita A."/>
            <person name="Taniwaki M."/>
            <person name="Tada H."/>
            <person name="Shirozu M."/>
            <person name="Nakano T."/>
            <person name="Tashiro K."/>
            <person name="Honjo T."/>
        </authorList>
    </citation>
    <scope>TISSUE SPECIFICITY</scope>
</reference>
<reference key="5">
    <citation type="journal article" date="2000" name="Proc. Natl. Acad. Sci. U.S.A.">
        <title>The synaptic glycoprotein neuroplastin is involved in long-term potentiation at hippocampal CA1 synapses.</title>
        <authorList>
            <person name="Smalla K.H."/>
            <person name="Matthies H."/>
            <person name="Langnase K."/>
            <person name="Shabir S."/>
            <person name="Bockers T.M."/>
            <person name="Wyneken U."/>
            <person name="Staak S."/>
            <person name="Krug M."/>
            <person name="Beesley P.W."/>
            <person name="Gundelfinger E.D."/>
        </authorList>
    </citation>
    <scope>FUNCTION</scope>
    <scope>SUBCELLULAR LOCATION (ISOFORM 2)</scope>
    <scope>TISSUE SPECIFICITY (ISOFORM 2)</scope>
</reference>
<reference key="6">
    <citation type="journal article" date="2006" name="J. Neurochem.">
        <title>The cell adhesion molecule neuroplastin-65 inhibits hippocampal long-term potentiation via a mitogen-activated protein kinase p38-dependent reduction in surface expression of GluR1-containing glutamate receptors.</title>
        <authorList>
            <person name="Empson R.M."/>
            <person name="Buckby L.E."/>
            <person name="Kraus M."/>
            <person name="Bates K.J."/>
            <person name="Crompton M.R."/>
            <person name="Gundelfinger E.D."/>
            <person name="Beesley P.W."/>
        </authorList>
    </citation>
    <scope>FUNCTION</scope>
</reference>
<reference key="7">
    <citation type="journal article" date="2013" name="J. Proteome Res.">
        <title>Site-specific glycan-peptide analysis for determination of N-glycoproteome heterogeneity.</title>
        <authorList>
            <person name="Parker B.L."/>
            <person name="Thaysen-Andersen M."/>
            <person name="Solis N."/>
            <person name="Scott N.E."/>
            <person name="Larsen M.R."/>
            <person name="Graham M.E."/>
            <person name="Packer N.H."/>
            <person name="Cordwell S.J."/>
        </authorList>
    </citation>
    <scope>GLYCOSYLATION [LARGE SCALE ANALYSIS] AT ASN-196 AND ASN-228</scope>
    <scope>IDENTIFICATION BY MASS SPECTROMETRY [LARGE SCALE ANALYSIS]</scope>
    <source>
        <tissue>Brain</tissue>
    </source>
</reference>
<reference key="8">
    <citation type="journal article" date="2010" name="FASEB J.">
        <title>Neuroplastin-55 binds to and signals through the fibroblast growth factor receptor.</title>
        <authorList>
            <person name="Owczarek S."/>
            <person name="Kiryushko D."/>
            <person name="Larsen M.H."/>
            <person name="Kastrup J.S."/>
            <person name="Gajhede M."/>
            <person name="Sandi C."/>
            <person name="Berezin V."/>
            <person name="Bock E."/>
            <person name="Soroka V."/>
        </authorList>
    </citation>
    <scope>X-RAY CRYSTALLOGRAPHY (1.95 ANGSTROMS) OF 148-333 (ISOFORM 1)</scope>
    <scope>FUNCTION (ISOFORM 1)</scope>
    <scope>FGFR1-BINDING (ISOFORM 1)</scope>
    <scope>DISULFIDE BONDS</scope>
    <scope>GLYCOSYLATION AT ASN-170; ASN-228; ASN-283 AND ASN-295</scope>
</reference>